<proteinExistence type="inferred from homology"/>
<organismHost>
    <name type="scientific">Felidae</name>
    <name type="common">cat family</name>
    <dbReference type="NCBI Taxonomy" id="9681"/>
</organismHost>
<keyword id="KW-0732">Signal</keyword>
<organism>
    <name type="scientific">Feline enteric coronavirus (strain 79-1683)</name>
    <name type="common">FeCoV</name>
    <name type="synonym">FECV</name>
    <dbReference type="NCBI Taxonomy" id="33733"/>
    <lineage>
        <taxon>Viruses</taxon>
        <taxon>Riboviria</taxon>
        <taxon>Orthornavirae</taxon>
        <taxon>Pisuviricota</taxon>
        <taxon>Pisoniviricetes</taxon>
        <taxon>Nidovirales</taxon>
        <taxon>Cornidovirineae</taxon>
        <taxon>Coronaviridae</taxon>
        <taxon>Orthocoronavirinae</taxon>
        <taxon>Alphacoronavirus</taxon>
        <taxon>Tegacovirus</taxon>
        <taxon>Alphacoronavirus 1</taxon>
    </lineage>
</organism>
<feature type="signal peptide" evidence="1">
    <location>
        <begin position="1"/>
        <end position="17"/>
    </location>
</feature>
<feature type="chain" id="PRO_0000106105" description="Non-structural protein 7b">
    <location>
        <begin position="18"/>
        <end position="176"/>
    </location>
</feature>
<name>NS7B_CVFE3</name>
<gene>
    <name type="ORF">7b</name>
</gene>
<dbReference type="EMBL" id="X66718">
    <property type="protein sequence ID" value="CAA47250.1"/>
    <property type="molecule type" value="Genomic_RNA"/>
</dbReference>
<dbReference type="PIR" id="E44056">
    <property type="entry name" value="E44056"/>
</dbReference>
<dbReference type="InterPro" id="IPR004945">
    <property type="entry name" value="Corona_6B_7B"/>
</dbReference>
<dbReference type="Pfam" id="PF03262">
    <property type="entry name" value="Corona_6B_7B"/>
    <property type="match status" value="1"/>
</dbReference>
<protein>
    <recommendedName>
        <fullName>Non-structural protein 7b</fullName>
        <shortName>ns7b</shortName>
    </recommendedName>
    <alternativeName>
        <fullName>Accessory protein 7b</fullName>
    </alternativeName>
</protein>
<accession>P33467</accession>
<evidence type="ECO:0000255" key="1"/>
<sequence length="176" mass="20210">MIVVVLVCIFLANGIKATAVQPDLHEHPVLTWDLLQHFVGNTLYITTHQVLALPLGSRVECESVDGFNCTRPGFQNSAHDHIDFYFDLSNPFYSFVDNFYIVVEGNQKINLRLVGAVPKQKRLKLSYKATRCLKLVFPRNYWSSRCLLLYRMVSTCNGRYKQPHCILGSLDLIWQC</sequence>
<reference key="1">
    <citation type="journal article" date="1992" name="Virology">
        <title>Genomic organization and expression of the 3' end of the canine and feline enteric coronaviruses.</title>
        <authorList>
            <person name="Vennema H."/>
            <person name="Rossen J.W.A."/>
            <person name="Wesseling J."/>
            <person name="Horzinek M.C."/>
            <person name="Rottier P.J.M."/>
        </authorList>
    </citation>
    <scope>NUCLEOTIDE SEQUENCE [GENOMIC RNA]</scope>
</reference>